<reference key="1">
    <citation type="journal article" date="2005" name="DNA Res.">
        <title>The complete plastid genome sequence of the haptophyte Emiliania huxleyi: a comparison to other plastid genomes.</title>
        <authorList>
            <person name="Sanchez-Puerta M.V."/>
            <person name="Bachvaroff T.R."/>
            <person name="Delwiche C.F."/>
        </authorList>
    </citation>
    <scope>NUCLEOTIDE SEQUENCE [LARGE SCALE GENOMIC DNA]</scope>
    <source>
        <strain>CCMP373 / CSIRO-CS-57 / BT6</strain>
    </source>
</reference>
<keyword id="KW-0150">Chloroplast</keyword>
<keyword id="KW-0240">DNA-directed RNA polymerase</keyword>
<keyword id="KW-0479">Metal-binding</keyword>
<keyword id="KW-0548">Nucleotidyltransferase</keyword>
<keyword id="KW-0934">Plastid</keyword>
<keyword id="KW-0804">Transcription</keyword>
<keyword id="KW-0808">Transferase</keyword>
<keyword id="KW-0862">Zinc</keyword>
<organism>
    <name type="scientific">Emiliania huxleyi</name>
    <name type="common">Coccolithophore</name>
    <name type="synonym">Pontosphaera huxleyi</name>
    <dbReference type="NCBI Taxonomy" id="2903"/>
    <lineage>
        <taxon>Eukaryota</taxon>
        <taxon>Haptista</taxon>
        <taxon>Haptophyta</taxon>
        <taxon>Prymnesiophyceae</taxon>
        <taxon>Isochrysidales</taxon>
        <taxon>Noelaerhabdaceae</taxon>
        <taxon>Emiliania</taxon>
    </lineage>
</organism>
<sequence>MQPDFKKIHSFENNLINKRSLKDLMYQAFLNYGIVKSSIIADRVKNLTFHFATQSGVSLSVEDLRVPAKKRELIGLTRNEVETTQKRYEIGSITSVEKFQKTIDIWNNANNFLKDDVLTYFRESDPLNPLYIMAFSGARGNISQVRQLVGMRGLMSNPQGQIIDLPIKSNFREGLTVTEYIISSYGARKGLVDTALRTADSGYLTRRLVDVAQDIIVRESDCGTTEGLWATELASNNFLNLRGRLLAEPIFTQEGNLFAPANTEITETFLQTLKTLKDHSPIKVRSSLTCTSTRSVCQNCYGWHLSHSKLVDLGEAVGIVAAQSIGEPGTQLTMRTFHTGGVFSGDLTRQVRSPMEGKIEYWEGHKASLFRTMHGKMGFRLKEEVNLIIKNSFGTTISFEIPAESLLLVNTDQYVYENEIIAEIQKDTNLILEEEQKEIYSETSGEVFFNALDVKVQADKQGNTYKTNNKAGLIWILQGSFYELPAFSETLLKPGLNLSKNTLLSRTPLYNKYPGWVQIDKSDNGTGICVQNFSVTLTNAFINEKVENSSRLQIKTDNQDFQFQLTTEPNSVLKQGDTIAVLDDNTYRTTTGGIVTYSLENPQASKKRKSVKNLFKGYFYWIPEETFKFSTLDEVRLSFSKNESIVGVGEEIMPNTFSKVGGFFQIKEAEQEVTIKPGELFELTSAESQIFDKSDRFVKPGNFIVPGKIITQQLVYLEFFELNEKQYILARPVQVFEVPKEEDLSLSQSFFPYNSHEHIKLKVIKRVFYKNWEKIISNNGINLLQTFIVFDFKQEQQGLEPRLEFTPSKVPGKSFLKIALYEVIKTFENNRKSSHSSLPTTTRNFVSNKQYVASNTLIGQIETTAGLVNKLAAINPHLNSGNMKEVLILNPSDLKKVFCPNVELLKKVSVGDLVRIGTLLNDNVKSPYSGQILEIFEDHILIRLSQPYLISAGTILHATSNNLVKAGDILATLVYETIKTTDIVQGLPKVEELLEARKVLHNALLAPCPGYAYVRFNKHGESTVQLIGLDNEVQTLALKPGIKTKFNSGDFVEVSSALTDGLISPHTKLETLFSYFKNRYTSFEACKLSFKLLQLFLIGEIQRTYRSQGVDIADKHVELIVKQMTSKVCIEDSGTTTFLPGEVLNFQKMADIALVAENKGEIPPSYVPLLLGITKASLNSDSFISAASFQETTRVLTEAAIEGRKDWLTGLKENVIIGRLIPAGTGFNYLENQERLAREKGEIDATFHREAKPLSENILDLRLVKKE</sequence>
<protein>
    <recommendedName>
        <fullName evidence="1">DNA-directed RNA polymerase subunit beta''</fullName>
        <ecNumber evidence="1">2.7.7.6</ecNumber>
    </recommendedName>
    <alternativeName>
        <fullName evidence="1">PEP</fullName>
    </alternativeName>
    <alternativeName>
        <fullName evidence="1">Plastid-encoded RNA polymerase subunit beta''</fullName>
        <shortName evidence="1">RNA polymerase subunit beta''</shortName>
    </alternativeName>
</protein>
<dbReference type="EC" id="2.7.7.6" evidence="1"/>
<dbReference type="EMBL" id="AY741371">
    <property type="protein sequence ID" value="AAX13861.1"/>
    <property type="molecule type" value="Genomic_DNA"/>
</dbReference>
<dbReference type="RefSeq" id="YP_277362.1">
    <property type="nucleotide sequence ID" value="NC_007288.1"/>
</dbReference>
<dbReference type="SMR" id="Q4G3A5"/>
<dbReference type="STRING" id="2903.Q4G3A5"/>
<dbReference type="GeneID" id="3562438"/>
<dbReference type="GO" id="GO:0009507">
    <property type="term" value="C:chloroplast"/>
    <property type="evidence" value="ECO:0007669"/>
    <property type="project" value="UniProtKB-SubCell"/>
</dbReference>
<dbReference type="GO" id="GO:0000428">
    <property type="term" value="C:DNA-directed RNA polymerase complex"/>
    <property type="evidence" value="ECO:0007669"/>
    <property type="project" value="UniProtKB-KW"/>
</dbReference>
<dbReference type="GO" id="GO:0005739">
    <property type="term" value="C:mitochondrion"/>
    <property type="evidence" value="ECO:0007669"/>
    <property type="project" value="GOC"/>
</dbReference>
<dbReference type="GO" id="GO:0003677">
    <property type="term" value="F:DNA binding"/>
    <property type="evidence" value="ECO:0007669"/>
    <property type="project" value="UniProtKB-UniRule"/>
</dbReference>
<dbReference type="GO" id="GO:0003899">
    <property type="term" value="F:DNA-directed RNA polymerase activity"/>
    <property type="evidence" value="ECO:0007669"/>
    <property type="project" value="UniProtKB-UniRule"/>
</dbReference>
<dbReference type="GO" id="GO:0008270">
    <property type="term" value="F:zinc ion binding"/>
    <property type="evidence" value="ECO:0007669"/>
    <property type="project" value="UniProtKB-UniRule"/>
</dbReference>
<dbReference type="GO" id="GO:0006351">
    <property type="term" value="P:DNA-templated transcription"/>
    <property type="evidence" value="ECO:0007669"/>
    <property type="project" value="UniProtKB-UniRule"/>
</dbReference>
<dbReference type="CDD" id="cd02655">
    <property type="entry name" value="RNAP_beta'_C"/>
    <property type="match status" value="1"/>
</dbReference>
<dbReference type="FunFam" id="1.10.150.390:FF:000002">
    <property type="entry name" value="DNA-directed RNA polymerase subunit beta"/>
    <property type="match status" value="1"/>
</dbReference>
<dbReference type="Gene3D" id="1.10.132.30">
    <property type="match status" value="1"/>
</dbReference>
<dbReference type="Gene3D" id="1.10.150.390">
    <property type="match status" value="1"/>
</dbReference>
<dbReference type="Gene3D" id="1.10.1790.20">
    <property type="match status" value="1"/>
</dbReference>
<dbReference type="Gene3D" id="2.40.50.100">
    <property type="match status" value="1"/>
</dbReference>
<dbReference type="Gene3D" id="1.10.274.100">
    <property type="entry name" value="RNA polymerase Rpb1, domain 3"/>
    <property type="match status" value="1"/>
</dbReference>
<dbReference type="HAMAP" id="MF_01324">
    <property type="entry name" value="RNApol_bact_RpoC2"/>
    <property type="match status" value="1"/>
</dbReference>
<dbReference type="InterPro" id="IPR012756">
    <property type="entry name" value="DNA-dir_RpoC2_beta_pp"/>
</dbReference>
<dbReference type="InterPro" id="IPR045867">
    <property type="entry name" value="DNA-dir_RpoC_beta_prime"/>
</dbReference>
<dbReference type="InterPro" id="IPR042102">
    <property type="entry name" value="RNA_pol_Rpb1_3_sf"/>
</dbReference>
<dbReference type="InterPro" id="IPR007083">
    <property type="entry name" value="RNA_pol_Rpb1_4"/>
</dbReference>
<dbReference type="InterPro" id="IPR007081">
    <property type="entry name" value="RNA_pol_Rpb1_5"/>
</dbReference>
<dbReference type="InterPro" id="IPR038120">
    <property type="entry name" value="Rpb1_funnel_sf"/>
</dbReference>
<dbReference type="NCBIfam" id="TIGR02388">
    <property type="entry name" value="rpoC2_cyan"/>
    <property type="match status" value="1"/>
</dbReference>
<dbReference type="PANTHER" id="PTHR19376">
    <property type="entry name" value="DNA-DIRECTED RNA POLYMERASE"/>
    <property type="match status" value="1"/>
</dbReference>
<dbReference type="PANTHER" id="PTHR19376:SF68">
    <property type="entry name" value="DNA-DIRECTED RNA POLYMERASE SUBUNIT BETA"/>
    <property type="match status" value="1"/>
</dbReference>
<dbReference type="Pfam" id="PF05000">
    <property type="entry name" value="RNA_pol_Rpb1_4"/>
    <property type="match status" value="1"/>
</dbReference>
<dbReference type="Pfam" id="PF04998">
    <property type="entry name" value="RNA_pol_Rpb1_5"/>
    <property type="match status" value="2"/>
</dbReference>
<dbReference type="SUPFAM" id="SSF64484">
    <property type="entry name" value="beta and beta-prime subunits of DNA dependent RNA-polymerase"/>
    <property type="match status" value="1"/>
</dbReference>
<name>RPOC2_EMIHU</name>
<evidence type="ECO:0000255" key="1">
    <source>
        <dbReference type="HAMAP-Rule" id="MF_01324"/>
    </source>
</evidence>
<proteinExistence type="inferred from homology"/>
<comment type="function">
    <text evidence="1">DNA-dependent RNA polymerase catalyzes the transcription of DNA into RNA using the four ribonucleoside triphosphates as substrates.</text>
</comment>
<comment type="catalytic activity">
    <reaction evidence="1">
        <text>RNA(n) + a ribonucleoside 5'-triphosphate = RNA(n+1) + diphosphate</text>
        <dbReference type="Rhea" id="RHEA:21248"/>
        <dbReference type="Rhea" id="RHEA-COMP:14527"/>
        <dbReference type="Rhea" id="RHEA-COMP:17342"/>
        <dbReference type="ChEBI" id="CHEBI:33019"/>
        <dbReference type="ChEBI" id="CHEBI:61557"/>
        <dbReference type="ChEBI" id="CHEBI:140395"/>
        <dbReference type="EC" id="2.7.7.6"/>
    </reaction>
</comment>
<comment type="cofactor">
    <cofactor evidence="1">
        <name>Zn(2+)</name>
        <dbReference type="ChEBI" id="CHEBI:29105"/>
    </cofactor>
    <text evidence="1">Binds 1 Zn(2+) ion per subunit.</text>
</comment>
<comment type="subunit">
    <text evidence="1">In plastids the minimal PEP RNA polymerase catalytic core is composed of four subunits: alpha, beta, beta', and beta''. When a (nuclear-encoded) sigma factor is associated with the core the holoenzyme is formed, which can initiate transcription.</text>
</comment>
<comment type="subcellular location">
    <subcellularLocation>
        <location evidence="1">Plastid</location>
        <location evidence="1">Chloroplast</location>
    </subcellularLocation>
</comment>
<comment type="similarity">
    <text evidence="1">Belongs to the RNA polymerase beta' chain family. RpoC2 subfamily.</text>
</comment>
<gene>
    <name evidence="1" type="primary">rpoC2</name>
</gene>
<accession>Q4G3A5</accession>
<geneLocation type="chloroplast"/>
<feature type="chain" id="PRO_0000225332" description="DNA-directed RNA polymerase subunit beta''">
    <location>
        <begin position="1"/>
        <end position="1267"/>
    </location>
</feature>
<feature type="binding site" evidence="1">
    <location>
        <position position="222"/>
    </location>
    <ligand>
        <name>Zn(2+)</name>
        <dbReference type="ChEBI" id="CHEBI:29105"/>
    </ligand>
</feature>
<feature type="binding site" evidence="1">
    <location>
        <position position="290"/>
    </location>
    <ligand>
        <name>Zn(2+)</name>
        <dbReference type="ChEBI" id="CHEBI:29105"/>
    </ligand>
</feature>
<feature type="binding site" evidence="1">
    <location>
        <position position="297"/>
    </location>
    <ligand>
        <name>Zn(2+)</name>
        <dbReference type="ChEBI" id="CHEBI:29105"/>
    </ligand>
</feature>
<feature type="binding site" evidence="1">
    <location>
        <position position="300"/>
    </location>
    <ligand>
        <name>Zn(2+)</name>
        <dbReference type="ChEBI" id="CHEBI:29105"/>
    </ligand>
</feature>